<accession>Q941F1</accession>
<accession>Q9M9Y7</accession>
<keyword id="KW-0025">Alternative splicing</keyword>
<keyword id="KW-0150">Chloroplast</keyword>
<keyword id="KW-0378">Hydrolase</keyword>
<keyword id="KW-0442">Lipid degradation</keyword>
<keyword id="KW-0443">Lipid metabolism</keyword>
<keyword id="KW-0934">Plastid</keyword>
<keyword id="KW-1185">Reference proteome</keyword>
<keyword id="KW-0809">Transit peptide</keyword>
<dbReference type="EC" id="3.1.1.-"/>
<dbReference type="EMBL" id="AC011001">
    <property type="protein sequence ID" value="AAF63138.1"/>
    <property type="molecule type" value="Genomic_DNA"/>
</dbReference>
<dbReference type="EMBL" id="CP002684">
    <property type="protein sequence ID" value="AEE28039.1"/>
    <property type="molecule type" value="Genomic_DNA"/>
</dbReference>
<dbReference type="EMBL" id="AY099599">
    <property type="protein sequence ID" value="AAM20450.1"/>
    <property type="molecule type" value="mRNA"/>
</dbReference>
<dbReference type="EMBL" id="AY052199">
    <property type="protein sequence ID" value="AAK97670.1"/>
    <property type="molecule type" value="mRNA"/>
</dbReference>
<dbReference type="EMBL" id="BT002718">
    <property type="protein sequence ID" value="AAO11634.1"/>
    <property type="molecule type" value="mRNA"/>
</dbReference>
<dbReference type="PIR" id="H86202">
    <property type="entry name" value="H86202"/>
</dbReference>
<dbReference type="RefSeq" id="NP_563772.1">
    <property type="nucleotide sequence ID" value="NM_100557.2"/>
</dbReference>
<dbReference type="RefSeq" id="NP_849603.1">
    <molecule id="Q941F1-1"/>
    <property type="nucleotide sequence ID" value="NM_179272.2"/>
</dbReference>
<dbReference type="SMR" id="Q941F1"/>
<dbReference type="FunCoup" id="Q941F1">
    <property type="interactions" value="52"/>
</dbReference>
<dbReference type="STRING" id="3702.Q941F1"/>
<dbReference type="SwissLipids" id="SLP:000001919">
    <molecule id="Q941F1-1"/>
</dbReference>
<dbReference type="ESTHER" id="arath-PLA15">
    <property type="family name" value="Plant_phospholipase"/>
</dbReference>
<dbReference type="PaxDb" id="3702-AT1G06800.1"/>
<dbReference type="ProteomicsDB" id="234964">
    <molecule id="Q941F1-1"/>
</dbReference>
<dbReference type="EnsemblPlants" id="AT1G06800.1">
    <molecule id="Q941F1-1"/>
    <property type="protein sequence ID" value="AT1G06800.1"/>
    <property type="gene ID" value="AT1G06800"/>
</dbReference>
<dbReference type="GeneID" id="837191"/>
<dbReference type="Gramene" id="AT1G06800.1">
    <molecule id="Q941F1-1"/>
    <property type="protein sequence ID" value="AT1G06800.1"/>
    <property type="gene ID" value="AT1G06800"/>
</dbReference>
<dbReference type="KEGG" id="ath:AT1G06800"/>
<dbReference type="Araport" id="AT1G06800"/>
<dbReference type="TAIR" id="AT1G06800">
    <property type="gene designation" value="PLA-I{GAMMA}1"/>
</dbReference>
<dbReference type="eggNOG" id="KOG4569">
    <property type="taxonomic scope" value="Eukaryota"/>
</dbReference>
<dbReference type="HOGENOM" id="CLU_018841_0_0_1"/>
<dbReference type="InParanoid" id="Q941F1"/>
<dbReference type="OMA" id="WHLDDHD"/>
<dbReference type="OrthoDB" id="438440at2759"/>
<dbReference type="PhylomeDB" id="Q941F1"/>
<dbReference type="BioCyc" id="ARA:AT1G06800-MONOMER"/>
<dbReference type="PRO" id="PR:Q941F1"/>
<dbReference type="Proteomes" id="UP000006548">
    <property type="component" value="Chromosome 1"/>
</dbReference>
<dbReference type="ExpressionAtlas" id="Q941F1">
    <property type="expression patterns" value="baseline and differential"/>
</dbReference>
<dbReference type="GO" id="GO:0009507">
    <property type="term" value="C:chloroplast"/>
    <property type="evidence" value="ECO:0000314"/>
    <property type="project" value="TAIR"/>
</dbReference>
<dbReference type="GO" id="GO:0047714">
    <property type="term" value="F:galactolipase activity"/>
    <property type="evidence" value="ECO:0000314"/>
    <property type="project" value="TAIR"/>
</dbReference>
<dbReference type="GO" id="GO:0008970">
    <property type="term" value="F:phospholipase A1 activity"/>
    <property type="evidence" value="ECO:0000314"/>
    <property type="project" value="TAIR"/>
</dbReference>
<dbReference type="GO" id="GO:0004806">
    <property type="term" value="F:triacylglycerol lipase activity"/>
    <property type="evidence" value="ECO:0000314"/>
    <property type="project" value="TAIR"/>
</dbReference>
<dbReference type="GO" id="GO:0016042">
    <property type="term" value="P:lipid catabolic process"/>
    <property type="evidence" value="ECO:0007669"/>
    <property type="project" value="UniProtKB-KW"/>
</dbReference>
<dbReference type="CDD" id="cd00519">
    <property type="entry name" value="Lipase_3"/>
    <property type="match status" value="1"/>
</dbReference>
<dbReference type="FunFam" id="3.40.50.1820:FF:000065">
    <property type="entry name" value="Phospholipase A1-II 3"/>
    <property type="match status" value="1"/>
</dbReference>
<dbReference type="Gene3D" id="3.40.50.1820">
    <property type="entry name" value="alpha/beta hydrolase"/>
    <property type="match status" value="1"/>
</dbReference>
<dbReference type="InterPro" id="IPR029058">
    <property type="entry name" value="AB_hydrolase_fold"/>
</dbReference>
<dbReference type="InterPro" id="IPR002921">
    <property type="entry name" value="Fungal_lipase-type"/>
</dbReference>
<dbReference type="PANTHER" id="PTHR31403">
    <property type="entry name" value="PHOSPHOLIPASE A1-IBETA2, CHLOROPLASTIC"/>
    <property type="match status" value="1"/>
</dbReference>
<dbReference type="PANTHER" id="PTHR31403:SF43">
    <property type="entry name" value="PHOSPHOLIPASE A1-IGAMMA1, CHLOROPLASTIC"/>
    <property type="match status" value="1"/>
</dbReference>
<dbReference type="Pfam" id="PF01764">
    <property type="entry name" value="Lipase_3"/>
    <property type="match status" value="1"/>
</dbReference>
<dbReference type="SUPFAM" id="SSF53474">
    <property type="entry name" value="alpha/beta-Hydrolases"/>
    <property type="match status" value="1"/>
</dbReference>
<dbReference type="PROSITE" id="PS00120">
    <property type="entry name" value="LIPASE_SER"/>
    <property type="match status" value="1"/>
</dbReference>
<comment type="function">
    <text evidence="4 5">Acylhydrolase with a broad specificity. Catalyzes the hydrolysis of phosphatidylcholine at the sn-1 position. Moderate activity toward phosphatidylcholine (PC), monogalactosyldiacylglycerol (MGDG), digalactosyldiacylglycerol (DGDG) and triacylglycerol (TAG). May display dual sn-1/sn-2 substrate specificity. Could be involved in early wound response.</text>
</comment>
<comment type="catalytic activity">
    <reaction evidence="4">
        <text>1,2-dihexadecanoyl-sn-glycero-3-phosphocholine + H2O = 2-hexadecanoyl-sn-glycero-3-phosphocholine + hexadecanoate + H(+)</text>
        <dbReference type="Rhea" id="RHEA:40487"/>
        <dbReference type="ChEBI" id="CHEBI:7896"/>
        <dbReference type="ChEBI" id="CHEBI:15377"/>
        <dbReference type="ChEBI" id="CHEBI:15378"/>
        <dbReference type="ChEBI" id="CHEBI:72999"/>
        <dbReference type="ChEBI" id="CHEBI:76078"/>
    </reaction>
    <physiologicalReaction direction="left-to-right" evidence="4">
        <dbReference type="Rhea" id="RHEA:40488"/>
    </physiologicalReaction>
</comment>
<comment type="catalytic activity">
    <reaction evidence="4">
        <text>a 1,2-diacyl-3-O-(beta-D-galactosyl)-sn-glycerol + H2O = an acyl-3-O-(beta-D-galactosyl)-sn-glycerol + a fatty acid + H(+)</text>
        <dbReference type="Rhea" id="RHEA:57084"/>
        <dbReference type="ChEBI" id="CHEBI:15377"/>
        <dbReference type="ChEBI" id="CHEBI:15378"/>
        <dbReference type="ChEBI" id="CHEBI:17615"/>
        <dbReference type="ChEBI" id="CHEBI:28868"/>
        <dbReference type="ChEBI" id="CHEBI:141434"/>
    </reaction>
    <physiologicalReaction direction="left-to-right" evidence="4">
        <dbReference type="Rhea" id="RHEA:57085"/>
    </physiologicalReaction>
</comment>
<comment type="catalytic activity">
    <reaction evidence="4">
        <text>a 1,2-diacyl-3-O-[alpha-D-galactosyl-(1-&gt;6)-beta-D-galactosyl]-sn-glycerol + H2O = acyl-3-O-[alpha-D-galactosyl-(1-&gt;6)-beta-D-galactosyl]-sn-glycerol + a fatty acid + H(+)</text>
        <dbReference type="Rhea" id="RHEA:48372"/>
        <dbReference type="ChEBI" id="CHEBI:15377"/>
        <dbReference type="ChEBI" id="CHEBI:15378"/>
        <dbReference type="ChEBI" id="CHEBI:28396"/>
        <dbReference type="ChEBI" id="CHEBI:28868"/>
        <dbReference type="ChEBI" id="CHEBI:90310"/>
    </reaction>
    <physiologicalReaction direction="left-to-right" evidence="4">
        <dbReference type="Rhea" id="RHEA:48373"/>
    </physiologicalReaction>
</comment>
<comment type="subcellular location">
    <subcellularLocation>
        <location evidence="4">Plastid</location>
        <location evidence="4">Chloroplast</location>
    </subcellularLocation>
</comment>
<comment type="alternative products">
    <event type="alternative splicing"/>
    <isoform>
        <id>Q941F1-1</id>
        <name>1</name>
        <sequence type="displayed"/>
    </isoform>
    <isoform>
        <id>Q941F1-2</id>
        <name>2</name>
        <sequence type="described" ref="VSP_039819 VSP_039820"/>
    </isoform>
</comment>
<comment type="tissue specificity">
    <text evidence="4">Ubiquitous. Highly expressed in leaves.</text>
</comment>
<comment type="induction">
    <text evidence="3 6">Not induced by wounding (PubMed:18267087). Induced by wounding (PubMed:24430866).</text>
</comment>
<comment type="disruption phenotype">
    <text evidence="5">No visible phenotype under standard growth phenotype. Decreased dinor-12-oxo-phytodienoic acid (dnOPDA) formation.</text>
</comment>
<comment type="miscellaneous">
    <molecule>Isoform 2</molecule>
    <text evidence="10">Major isoform.</text>
</comment>
<comment type="similarity">
    <text evidence="10">Belongs to the AB hydrolase superfamily. Lipase family.</text>
</comment>
<protein>
    <recommendedName>
        <fullName evidence="8">Phospholipase A1-Igamma1, chloroplastic</fullName>
        <ecNumber>3.1.1.-</ecNumber>
    </recommendedName>
    <alternativeName>
        <fullName evidence="9">DAD1-like lipase 4</fullName>
    </alternativeName>
</protein>
<evidence type="ECO:0000250" key="1">
    <source>
        <dbReference type="UniProtKB" id="Q948R1"/>
    </source>
</evidence>
<evidence type="ECO:0000255" key="2"/>
<evidence type="ECO:0000269" key="3">
    <source>
    </source>
</evidence>
<evidence type="ECO:0000269" key="4">
    <source>
    </source>
</evidence>
<evidence type="ECO:0000269" key="5">
    <source>
    </source>
</evidence>
<evidence type="ECO:0000269" key="6">
    <source>
    </source>
</evidence>
<evidence type="ECO:0000303" key="7">
    <source>
    </source>
</evidence>
<evidence type="ECO:0000303" key="8">
    <source>
    </source>
</evidence>
<evidence type="ECO:0000303" key="9">
    <source>
    </source>
</evidence>
<evidence type="ECO:0000305" key="10"/>
<evidence type="ECO:0000312" key="11">
    <source>
        <dbReference type="Araport" id="AT1G06800"/>
    </source>
</evidence>
<organism>
    <name type="scientific">Arabidopsis thaliana</name>
    <name type="common">Mouse-ear cress</name>
    <dbReference type="NCBI Taxonomy" id="3702"/>
    <lineage>
        <taxon>Eukaryota</taxon>
        <taxon>Viridiplantae</taxon>
        <taxon>Streptophyta</taxon>
        <taxon>Embryophyta</taxon>
        <taxon>Tracheophyta</taxon>
        <taxon>Spermatophyta</taxon>
        <taxon>Magnoliopsida</taxon>
        <taxon>eudicotyledons</taxon>
        <taxon>Gunneridae</taxon>
        <taxon>Pentapetalae</taxon>
        <taxon>rosids</taxon>
        <taxon>malvids</taxon>
        <taxon>Brassicales</taxon>
        <taxon>Brassicaceae</taxon>
        <taxon>Camelineae</taxon>
        <taxon>Arabidopsis</taxon>
    </lineage>
</organism>
<reference key="1">
    <citation type="journal article" date="2000" name="Nature">
        <title>Sequence and analysis of chromosome 1 of the plant Arabidopsis thaliana.</title>
        <authorList>
            <person name="Theologis A."/>
            <person name="Ecker J.R."/>
            <person name="Palm C.J."/>
            <person name="Federspiel N.A."/>
            <person name="Kaul S."/>
            <person name="White O."/>
            <person name="Alonso J."/>
            <person name="Altafi H."/>
            <person name="Araujo R."/>
            <person name="Bowman C.L."/>
            <person name="Brooks S.Y."/>
            <person name="Buehler E."/>
            <person name="Chan A."/>
            <person name="Chao Q."/>
            <person name="Chen H."/>
            <person name="Cheuk R.F."/>
            <person name="Chin C.W."/>
            <person name="Chung M.K."/>
            <person name="Conn L."/>
            <person name="Conway A.B."/>
            <person name="Conway A.R."/>
            <person name="Creasy T.H."/>
            <person name="Dewar K."/>
            <person name="Dunn P."/>
            <person name="Etgu P."/>
            <person name="Feldblyum T.V."/>
            <person name="Feng J.-D."/>
            <person name="Fong B."/>
            <person name="Fujii C.Y."/>
            <person name="Gill J.E."/>
            <person name="Goldsmith A.D."/>
            <person name="Haas B."/>
            <person name="Hansen N.F."/>
            <person name="Hughes B."/>
            <person name="Huizar L."/>
            <person name="Hunter J.L."/>
            <person name="Jenkins J."/>
            <person name="Johnson-Hopson C."/>
            <person name="Khan S."/>
            <person name="Khaykin E."/>
            <person name="Kim C.J."/>
            <person name="Koo H.L."/>
            <person name="Kremenetskaia I."/>
            <person name="Kurtz D.B."/>
            <person name="Kwan A."/>
            <person name="Lam B."/>
            <person name="Langin-Hooper S."/>
            <person name="Lee A."/>
            <person name="Lee J.M."/>
            <person name="Lenz C.A."/>
            <person name="Li J.H."/>
            <person name="Li Y.-P."/>
            <person name="Lin X."/>
            <person name="Liu S.X."/>
            <person name="Liu Z.A."/>
            <person name="Luros J.S."/>
            <person name="Maiti R."/>
            <person name="Marziali A."/>
            <person name="Militscher J."/>
            <person name="Miranda M."/>
            <person name="Nguyen M."/>
            <person name="Nierman W.C."/>
            <person name="Osborne B.I."/>
            <person name="Pai G."/>
            <person name="Peterson J."/>
            <person name="Pham P.K."/>
            <person name="Rizzo M."/>
            <person name="Rooney T."/>
            <person name="Rowley D."/>
            <person name="Sakano H."/>
            <person name="Salzberg S.L."/>
            <person name="Schwartz J.R."/>
            <person name="Shinn P."/>
            <person name="Southwick A.M."/>
            <person name="Sun H."/>
            <person name="Tallon L.J."/>
            <person name="Tambunga G."/>
            <person name="Toriumi M.J."/>
            <person name="Town C.D."/>
            <person name="Utterback T."/>
            <person name="Van Aken S."/>
            <person name="Vaysberg M."/>
            <person name="Vysotskaia V.S."/>
            <person name="Walker M."/>
            <person name="Wu D."/>
            <person name="Yu G."/>
            <person name="Fraser C.M."/>
            <person name="Venter J.C."/>
            <person name="Davis R.W."/>
        </authorList>
    </citation>
    <scope>NUCLEOTIDE SEQUENCE [LARGE SCALE GENOMIC DNA]</scope>
    <source>
        <strain>cv. Columbia</strain>
    </source>
</reference>
<reference key="2">
    <citation type="journal article" date="2017" name="Plant J.">
        <title>Araport11: a complete reannotation of the Arabidopsis thaliana reference genome.</title>
        <authorList>
            <person name="Cheng C.Y."/>
            <person name="Krishnakumar V."/>
            <person name="Chan A.P."/>
            <person name="Thibaud-Nissen F."/>
            <person name="Schobel S."/>
            <person name="Town C.D."/>
        </authorList>
    </citation>
    <scope>GENOME REANNOTATION</scope>
    <source>
        <strain>cv. Columbia</strain>
    </source>
</reference>
<reference key="3">
    <citation type="journal article" date="2003" name="Science">
        <title>Empirical analysis of transcriptional activity in the Arabidopsis genome.</title>
        <authorList>
            <person name="Yamada K."/>
            <person name="Lim J."/>
            <person name="Dale J.M."/>
            <person name="Chen H."/>
            <person name="Shinn P."/>
            <person name="Palm C.J."/>
            <person name="Southwick A.M."/>
            <person name="Wu H.C."/>
            <person name="Kim C.J."/>
            <person name="Nguyen M."/>
            <person name="Pham P.K."/>
            <person name="Cheuk R.F."/>
            <person name="Karlin-Newmann G."/>
            <person name="Liu S.X."/>
            <person name="Lam B."/>
            <person name="Sakano H."/>
            <person name="Wu T."/>
            <person name="Yu G."/>
            <person name="Miranda M."/>
            <person name="Quach H.L."/>
            <person name="Tripp M."/>
            <person name="Chang C.H."/>
            <person name="Lee J.M."/>
            <person name="Toriumi M.J."/>
            <person name="Chan M.M."/>
            <person name="Tang C.C."/>
            <person name="Onodera C.S."/>
            <person name="Deng J.M."/>
            <person name="Akiyama K."/>
            <person name="Ansari Y."/>
            <person name="Arakawa T."/>
            <person name="Banh J."/>
            <person name="Banno F."/>
            <person name="Bowser L."/>
            <person name="Brooks S.Y."/>
            <person name="Carninci P."/>
            <person name="Chao Q."/>
            <person name="Choy N."/>
            <person name="Enju A."/>
            <person name="Goldsmith A.D."/>
            <person name="Gurjal M."/>
            <person name="Hansen N.F."/>
            <person name="Hayashizaki Y."/>
            <person name="Johnson-Hopson C."/>
            <person name="Hsuan V.W."/>
            <person name="Iida K."/>
            <person name="Karnes M."/>
            <person name="Khan S."/>
            <person name="Koesema E."/>
            <person name="Ishida J."/>
            <person name="Jiang P.X."/>
            <person name="Jones T."/>
            <person name="Kawai J."/>
            <person name="Kamiya A."/>
            <person name="Meyers C."/>
            <person name="Nakajima M."/>
            <person name="Narusaka M."/>
            <person name="Seki M."/>
            <person name="Sakurai T."/>
            <person name="Satou M."/>
            <person name="Tamse R."/>
            <person name="Vaysberg M."/>
            <person name="Wallender E.K."/>
            <person name="Wong C."/>
            <person name="Yamamura Y."/>
            <person name="Yuan S."/>
            <person name="Shinozaki K."/>
            <person name="Davis R.W."/>
            <person name="Theologis A."/>
            <person name="Ecker J.R."/>
        </authorList>
    </citation>
    <scope>NUCLEOTIDE SEQUENCE [LARGE SCALE MRNA] (ISOFORMS 1 AND 2)</scope>
    <source>
        <strain>cv. Columbia</strain>
    </source>
</reference>
<reference key="4">
    <citation type="journal article" date="2004" name="Trends Plant Sci.">
        <title>Phospholipid-derived signaling mediated by phospholipase A in plants.</title>
        <authorList>
            <person name="Ryu S.B."/>
        </authorList>
    </citation>
    <scope>GENE FAMILY</scope>
    <scope>NOMENCLATURE</scope>
</reference>
<reference key="5">
    <citation type="journal article" date="2008" name="Dev. Cell">
        <title>Cooperation and functional diversification of two closely related galactolipase genes for jasmonate biosynthesis.</title>
        <authorList>
            <person name="Hyun Y."/>
            <person name="Choi S."/>
            <person name="Hwang H.J."/>
            <person name="Yu J."/>
            <person name="Nam S.J."/>
            <person name="Ko J."/>
            <person name="Park J.Y."/>
            <person name="Seo Y.S."/>
            <person name="Kim E.Y."/>
            <person name="Ryu S.B."/>
            <person name="Kim W.T."/>
            <person name="Lee Y.H."/>
            <person name="Kang H."/>
            <person name="Lee I."/>
        </authorList>
    </citation>
    <scope>INDUCTION</scope>
</reference>
<reference key="6">
    <citation type="journal article" date="2009" name="FEBS Lett.">
        <title>Enzymatic characterization of class I DAD1-like acylhydrolase members targeted to chloroplast in Arabidopsis.</title>
        <authorList>
            <person name="Seo Y.S."/>
            <person name="Kim E.Y."/>
            <person name="Kim J.H."/>
            <person name="Kim W.T."/>
        </authorList>
    </citation>
    <scope>CATALYTIC ACTIVITY</scope>
    <scope>FUNCTION</scope>
    <scope>SUBCELLULAR LOCATION</scope>
    <scope>TISSUE SPECIFICITY</scope>
    <scope>ALTERNATIVE SPLICING</scope>
</reference>
<reference key="7">
    <citation type="journal article" date="2010" name="Plant Physiol.">
        <title>DONGLE and DEFECTIVE IN ANTHER DEHISCENCE1 lipases are not essential for wound- and pathogen-induced jasmonate biosynthesis: redundant lipases contribute to jasmonate formation.</title>
        <authorList>
            <person name="Ellinger D."/>
            <person name="Stingl N."/>
            <person name="Kubigsteltig I.I."/>
            <person name="Bals T."/>
            <person name="Juenger M."/>
            <person name="Pollmann S."/>
            <person name="Berger S."/>
            <person name="Schuenemann D."/>
            <person name="Mueller M.J."/>
        </authorList>
    </citation>
    <scope>FUNCTION</scope>
    <scope>DISRUPTION PHENOTYPE</scope>
</reference>
<reference key="8">
    <citation type="journal article" date="2014" name="Plant Cell Rep.">
        <title>Wound-induced expression of DEFECTIVE IN ANTHER DEHISCENCE1 and DAD1-like lipase genes is mediated by both CORONATINE INSENSITIVE1-dependent and independent pathways in Arabidopsis thaliana.</title>
        <authorList>
            <person name="Rudus I."/>
            <person name="Terai H."/>
            <person name="Shimizu T."/>
            <person name="Kojima H."/>
            <person name="Hattori K."/>
            <person name="Nishimori Y."/>
            <person name="Tsukagoshi H."/>
            <person name="Kamiya Y."/>
            <person name="Seo M."/>
            <person name="Nakamura K."/>
            <person name="Kepczynski J."/>
            <person name="Ishiguro S."/>
        </authorList>
    </citation>
    <scope>INDUCTION BY WOUNDING</scope>
</reference>
<name>PLA15_ARATH</name>
<proteinExistence type="evidence at protein level"/>
<sequence length="515" mass="58445">MATIPSHNLRPHTTNQRTQYSLSFRPHFSRSTLITFPARSSPARAMSRTDEEASISTRLEQESYGLTTAEDIRRRDGEAKESKRLRDTWRKIQGEDDWAGLMDPMDPVLRSELIRYGEMAQACYDAFDFDPFSRYCGSCRFTRRHLFDSLGIIDSGYEVARYLYATSNINLPNFFSKSRWSKVWSKNANWMGYVAVSDDNEATRCRLGRRDIAIAWRGTVTRLEWIADLKDFLKPVSGNGFRCPDPAVKAESGFLDLYTDKDTSCNFSKFSAREQVLTEVKRLVERYGDEEGEELSITVTGHSLGGALAVLSAYDVAEMGVNRTRKGKVIPVTAFTYGGPRVGNIRFKERIEKLGVKVLRVVNEHDVVAKSPGLFLNERAPQALMKLAGGLPWCYSHVGEMLPLDHQKSPFLKPTVDLSTAHNLEALLHLLDGYHGKGQRFVLSSGRDPALVNKASDFLKDHFMVPPYWRQDANKGMVRNTDGRWIQPDRIRADDQHAPDIHQLLTQLHHPSQLL</sequence>
<gene>
    <name evidence="9" type="primary">DALL4</name>
    <name evidence="11" type="ordered locus">At1g06800</name>
    <name type="ORF">F4H5.11</name>
    <name type="ORF">F4H5_10</name>
</gene>
<feature type="transit peptide" description="Chloroplast" evidence="2">
    <location>
        <begin position="1"/>
        <end position="44"/>
    </location>
</feature>
<feature type="chain" id="PRO_0000398879" description="Phospholipase A1-Igamma1, chloroplastic">
    <location>
        <begin position="45"/>
        <end position="515"/>
    </location>
</feature>
<feature type="short sequence motif" description="GXSXG" evidence="1">
    <location>
        <begin position="301"/>
        <end position="305"/>
    </location>
</feature>
<feature type="active site" description="Acyl-ester intermediate" evidence="1">
    <location>
        <position position="303"/>
    </location>
</feature>
<feature type="active site" description="Charge relay system" evidence="1">
    <location>
        <position position="366"/>
    </location>
</feature>
<feature type="active site" description="Charge relay system" evidence="1">
    <location>
        <position position="422"/>
    </location>
</feature>
<feature type="splice variant" id="VSP_039819" description="In isoform 2." evidence="7">
    <original>YHGKGQRFVLS</original>
    <variation>SVILLFITF</variation>
    <location>
        <begin position="434"/>
        <end position="444"/>
    </location>
</feature>
<feature type="splice variant" id="VSP_039820" description="In isoform 2." evidence="7">
    <location>
        <begin position="445"/>
        <end position="515"/>
    </location>
</feature>